<protein>
    <recommendedName>
        <fullName>Structural maintenance of chromosomes protein 5</fullName>
    </recommendedName>
    <alternativeName>
        <fullName>Protein EMBRYO DEFECTIVE 2782</fullName>
    </alternativeName>
</protein>
<proteinExistence type="evidence at transcript level"/>
<accession>Q9LFS8</accession>
<accession>Q9FV56</accession>
<dbReference type="EMBL" id="AL391145">
    <property type="protein sequence ID" value="CAC01791.1"/>
    <property type="molecule type" value="Genomic_DNA"/>
</dbReference>
<dbReference type="EMBL" id="CP002688">
    <property type="protein sequence ID" value="AED92224.1"/>
    <property type="molecule type" value="Genomic_DNA"/>
</dbReference>
<dbReference type="EMBL" id="AF250342">
    <property type="protein sequence ID" value="AAG10148.1"/>
    <property type="molecule type" value="mRNA"/>
</dbReference>
<dbReference type="PIR" id="T51375">
    <property type="entry name" value="T51375"/>
</dbReference>
<dbReference type="RefSeq" id="NP_197096.1">
    <property type="nucleotide sequence ID" value="NM_121597.3"/>
</dbReference>
<dbReference type="SMR" id="Q9LFS8"/>
<dbReference type="BioGRID" id="16725">
    <property type="interactions" value="3"/>
</dbReference>
<dbReference type="FunCoup" id="Q9LFS8">
    <property type="interactions" value="4329"/>
</dbReference>
<dbReference type="STRING" id="3702.Q9LFS8"/>
<dbReference type="PaxDb" id="3702-AT5G15920.1"/>
<dbReference type="ProteomicsDB" id="228203"/>
<dbReference type="EnsemblPlants" id="AT5G15920.1">
    <property type="protein sequence ID" value="AT5G15920.1"/>
    <property type="gene ID" value="AT5G15920"/>
</dbReference>
<dbReference type="GeneID" id="831449"/>
<dbReference type="Gramene" id="AT5G15920.1">
    <property type="protein sequence ID" value="AT5G15920.1"/>
    <property type="gene ID" value="AT5G15920"/>
</dbReference>
<dbReference type="KEGG" id="ath:AT5G15920"/>
<dbReference type="Araport" id="AT5G15920"/>
<dbReference type="TAIR" id="AT5G15920">
    <property type="gene designation" value="SMC5"/>
</dbReference>
<dbReference type="eggNOG" id="KOG0979">
    <property type="taxonomic scope" value="Eukaryota"/>
</dbReference>
<dbReference type="HOGENOM" id="CLU_004969_1_0_1"/>
<dbReference type="InParanoid" id="Q9LFS8"/>
<dbReference type="OMA" id="RFWTSQP"/>
<dbReference type="PhylomeDB" id="Q9LFS8"/>
<dbReference type="PRO" id="PR:Q9LFS8"/>
<dbReference type="Proteomes" id="UP000006548">
    <property type="component" value="Chromosome 5"/>
</dbReference>
<dbReference type="ExpressionAtlas" id="Q9LFS8">
    <property type="expression patterns" value="baseline and differential"/>
</dbReference>
<dbReference type="GO" id="GO:0005694">
    <property type="term" value="C:chromosome"/>
    <property type="evidence" value="ECO:0007669"/>
    <property type="project" value="UniProtKB-SubCell"/>
</dbReference>
<dbReference type="GO" id="GO:0005829">
    <property type="term" value="C:cytosol"/>
    <property type="evidence" value="ECO:0007005"/>
    <property type="project" value="TAIR"/>
</dbReference>
<dbReference type="GO" id="GO:0005634">
    <property type="term" value="C:nucleus"/>
    <property type="evidence" value="ECO:0007669"/>
    <property type="project" value="UniProtKB-SubCell"/>
</dbReference>
<dbReference type="GO" id="GO:0009506">
    <property type="term" value="C:plasmodesma"/>
    <property type="evidence" value="ECO:0007005"/>
    <property type="project" value="TAIR"/>
</dbReference>
<dbReference type="GO" id="GO:0005524">
    <property type="term" value="F:ATP binding"/>
    <property type="evidence" value="ECO:0007669"/>
    <property type="project" value="UniProtKB-KW"/>
</dbReference>
<dbReference type="GO" id="GO:0006310">
    <property type="term" value="P:DNA recombination"/>
    <property type="evidence" value="ECO:0007669"/>
    <property type="project" value="UniProtKB-KW"/>
</dbReference>
<dbReference type="GO" id="GO:0006281">
    <property type="term" value="P:DNA repair"/>
    <property type="evidence" value="ECO:0007669"/>
    <property type="project" value="UniProtKB-KW"/>
</dbReference>
<dbReference type="GO" id="GO:0007062">
    <property type="term" value="P:sister chromatid cohesion"/>
    <property type="evidence" value="ECO:0000315"/>
    <property type="project" value="TAIR"/>
</dbReference>
<dbReference type="FunFam" id="3.40.50.300:FF:001301">
    <property type="entry name" value="Structural maintenance of chromosomes 5"/>
    <property type="match status" value="1"/>
</dbReference>
<dbReference type="FunFam" id="3.40.50.300:FF:003225">
    <property type="entry name" value="Structural maintenance of chromosomes protein 5"/>
    <property type="match status" value="1"/>
</dbReference>
<dbReference type="Gene3D" id="3.40.50.300">
    <property type="entry name" value="P-loop containing nucleotide triphosphate hydrolases"/>
    <property type="match status" value="2"/>
</dbReference>
<dbReference type="InterPro" id="IPR027417">
    <property type="entry name" value="P-loop_NTPase"/>
</dbReference>
<dbReference type="InterPro" id="IPR003395">
    <property type="entry name" value="RecF/RecN/SMC_N"/>
</dbReference>
<dbReference type="PANTHER" id="PTHR45916">
    <property type="entry name" value="STRUCTURAL MAINTENANCE OF CHROMOSOMES PROTEIN 5"/>
    <property type="match status" value="1"/>
</dbReference>
<dbReference type="PANTHER" id="PTHR45916:SF1">
    <property type="entry name" value="STRUCTURAL MAINTENANCE OF CHROMOSOMES PROTEIN 5"/>
    <property type="match status" value="1"/>
</dbReference>
<dbReference type="Pfam" id="PF02463">
    <property type="entry name" value="SMC_N"/>
    <property type="match status" value="1"/>
</dbReference>
<dbReference type="SUPFAM" id="SSF52540">
    <property type="entry name" value="P-loop containing nucleoside triphosphate hydrolases"/>
    <property type="match status" value="1"/>
</dbReference>
<feature type="chain" id="PRO_0000424411" description="Structural maintenance of chromosomes protein 5">
    <location>
        <begin position="1"/>
        <end position="1053"/>
    </location>
</feature>
<feature type="domain" description="Zinc-hook">
    <location>
        <begin position="23"/>
        <end position="991"/>
    </location>
</feature>
<feature type="region of interest" description="Flexible hinge">
    <location>
        <begin position="432"/>
        <end position="616"/>
    </location>
</feature>
<feature type="coiled-coil region" evidence="2">
    <location>
        <begin position="182"/>
        <end position="431"/>
    </location>
</feature>
<feature type="coiled-coil region" evidence="2">
    <location>
        <begin position="617"/>
        <end position="798"/>
    </location>
</feature>
<feature type="binding site" evidence="2">
    <location>
        <begin position="50"/>
        <end position="57"/>
    </location>
    <ligand>
        <name>ATP</name>
        <dbReference type="ChEBI" id="CHEBI:30616"/>
    </ligand>
</feature>
<organism>
    <name type="scientific">Arabidopsis thaliana</name>
    <name type="common">Mouse-ear cress</name>
    <dbReference type="NCBI Taxonomy" id="3702"/>
    <lineage>
        <taxon>Eukaryota</taxon>
        <taxon>Viridiplantae</taxon>
        <taxon>Streptophyta</taxon>
        <taxon>Embryophyta</taxon>
        <taxon>Tracheophyta</taxon>
        <taxon>Spermatophyta</taxon>
        <taxon>Magnoliopsida</taxon>
        <taxon>eudicotyledons</taxon>
        <taxon>Gunneridae</taxon>
        <taxon>Pentapetalae</taxon>
        <taxon>rosids</taxon>
        <taxon>malvids</taxon>
        <taxon>Brassicales</taxon>
        <taxon>Brassicaceae</taxon>
        <taxon>Camelineae</taxon>
        <taxon>Arabidopsis</taxon>
    </lineage>
</organism>
<keyword id="KW-0067">ATP-binding</keyword>
<keyword id="KW-0158">Chromosome</keyword>
<keyword id="KW-0175">Coiled coil</keyword>
<keyword id="KW-0227">DNA damage</keyword>
<keyword id="KW-0233">DNA recombination</keyword>
<keyword id="KW-0234">DNA repair</keyword>
<keyword id="KW-0547">Nucleotide-binding</keyword>
<keyword id="KW-0539">Nucleus</keyword>
<keyword id="KW-1185">Reference proteome</keyword>
<evidence type="ECO:0000250" key="1"/>
<evidence type="ECO:0000255" key="2"/>
<evidence type="ECO:0000269" key="3">
    <source>
    </source>
</evidence>
<evidence type="ECO:0000305" key="4"/>
<reference key="1">
    <citation type="journal article" date="2000" name="Nature">
        <title>Sequence and analysis of chromosome 5 of the plant Arabidopsis thaliana.</title>
        <authorList>
            <person name="Tabata S."/>
            <person name="Kaneko T."/>
            <person name="Nakamura Y."/>
            <person name="Kotani H."/>
            <person name="Kato T."/>
            <person name="Asamizu E."/>
            <person name="Miyajima N."/>
            <person name="Sasamoto S."/>
            <person name="Kimura T."/>
            <person name="Hosouchi T."/>
            <person name="Kawashima K."/>
            <person name="Kohara M."/>
            <person name="Matsumoto M."/>
            <person name="Matsuno A."/>
            <person name="Muraki A."/>
            <person name="Nakayama S."/>
            <person name="Nakazaki N."/>
            <person name="Naruo K."/>
            <person name="Okumura S."/>
            <person name="Shinpo S."/>
            <person name="Takeuchi C."/>
            <person name="Wada T."/>
            <person name="Watanabe A."/>
            <person name="Yamada M."/>
            <person name="Yasuda M."/>
            <person name="Sato S."/>
            <person name="de la Bastide M."/>
            <person name="Huang E."/>
            <person name="Spiegel L."/>
            <person name="Gnoj L."/>
            <person name="O'Shaughnessy A."/>
            <person name="Preston R."/>
            <person name="Habermann K."/>
            <person name="Murray J."/>
            <person name="Johnson D."/>
            <person name="Rohlfing T."/>
            <person name="Nelson J."/>
            <person name="Stoneking T."/>
            <person name="Pepin K."/>
            <person name="Spieth J."/>
            <person name="Sekhon M."/>
            <person name="Armstrong J."/>
            <person name="Becker M."/>
            <person name="Belter E."/>
            <person name="Cordum H."/>
            <person name="Cordes M."/>
            <person name="Courtney L."/>
            <person name="Courtney W."/>
            <person name="Dante M."/>
            <person name="Du H."/>
            <person name="Edwards J."/>
            <person name="Fryman J."/>
            <person name="Haakensen B."/>
            <person name="Lamar E."/>
            <person name="Latreille P."/>
            <person name="Leonard S."/>
            <person name="Meyer R."/>
            <person name="Mulvaney E."/>
            <person name="Ozersky P."/>
            <person name="Riley A."/>
            <person name="Strowmatt C."/>
            <person name="Wagner-McPherson C."/>
            <person name="Wollam A."/>
            <person name="Yoakum M."/>
            <person name="Bell M."/>
            <person name="Dedhia N."/>
            <person name="Parnell L."/>
            <person name="Shah R."/>
            <person name="Rodriguez M."/>
            <person name="Hoon See L."/>
            <person name="Vil D."/>
            <person name="Baker J."/>
            <person name="Kirchoff K."/>
            <person name="Toth K."/>
            <person name="King L."/>
            <person name="Bahret A."/>
            <person name="Miller B."/>
            <person name="Marra M.A."/>
            <person name="Martienssen R."/>
            <person name="McCombie W.R."/>
            <person name="Wilson R.K."/>
            <person name="Murphy G."/>
            <person name="Bancroft I."/>
            <person name="Volckaert G."/>
            <person name="Wambutt R."/>
            <person name="Duesterhoeft A."/>
            <person name="Stiekema W."/>
            <person name="Pohl T."/>
            <person name="Entian K.-D."/>
            <person name="Terryn N."/>
            <person name="Hartley N."/>
            <person name="Bent E."/>
            <person name="Johnson S."/>
            <person name="Langham S.-A."/>
            <person name="McCullagh B."/>
            <person name="Robben J."/>
            <person name="Grymonprez B."/>
            <person name="Zimmermann W."/>
            <person name="Ramsperger U."/>
            <person name="Wedler H."/>
            <person name="Balke K."/>
            <person name="Wedler E."/>
            <person name="Peters S."/>
            <person name="van Staveren M."/>
            <person name="Dirkse W."/>
            <person name="Mooijman P."/>
            <person name="Klein Lankhorst R."/>
            <person name="Weitzenegger T."/>
            <person name="Bothe G."/>
            <person name="Rose M."/>
            <person name="Hauf J."/>
            <person name="Berneiser S."/>
            <person name="Hempel S."/>
            <person name="Feldpausch M."/>
            <person name="Lamberth S."/>
            <person name="Villarroel R."/>
            <person name="Gielen J."/>
            <person name="Ardiles W."/>
            <person name="Bents O."/>
            <person name="Lemcke K."/>
            <person name="Kolesov G."/>
            <person name="Mayer K.F.X."/>
            <person name="Rudd S."/>
            <person name="Schoof H."/>
            <person name="Schueller C."/>
            <person name="Zaccaria P."/>
            <person name="Mewes H.-W."/>
            <person name="Bevan M."/>
            <person name="Fransz P.F."/>
        </authorList>
    </citation>
    <scope>NUCLEOTIDE SEQUENCE [LARGE SCALE GENOMIC DNA]</scope>
    <source>
        <strain>cv. Columbia</strain>
    </source>
</reference>
<reference key="2">
    <citation type="journal article" date="2017" name="Plant J.">
        <title>Araport11: a complete reannotation of the Arabidopsis thaliana reference genome.</title>
        <authorList>
            <person name="Cheng C.Y."/>
            <person name="Krishnakumar V."/>
            <person name="Chan A.P."/>
            <person name="Thibaud-Nissen F."/>
            <person name="Schobel S."/>
            <person name="Town C.D."/>
        </authorList>
    </citation>
    <scope>GENOME REANNOTATION</scope>
    <source>
        <strain>cv. Columbia</strain>
    </source>
</reference>
<reference key="3">
    <citation type="journal article" date="2000" name="Plant J.">
        <title>Functional identification of an Arabidopsis Snf4 ortholog by screening for heterologous multicopy suppressors of snf4 deficiency in yeast.</title>
        <authorList>
            <person name="Kleinow T."/>
            <person name="Bhalerao R."/>
            <person name="Breuer F."/>
            <person name="Umeda M."/>
            <person name="Salchert K."/>
            <person name="Koncz C."/>
        </authorList>
    </citation>
    <scope>NUCLEOTIDE SEQUENCE [MRNA] OF 1-284</scope>
    <source>
        <strain>cv. Columbia</strain>
    </source>
</reference>
<reference key="4">
    <citation type="journal article" date="2009" name="Plant Cell">
        <title>The STRUCTURAL MAINTENANCE OF CHROMOSOMES 5/6 complex promotes sister chromatid alignment and homologous recombination after DNA damage in Arabidopsis thaliana.</title>
        <authorList>
            <person name="Watanabe K."/>
            <person name="Pacher M."/>
            <person name="Dukowic S."/>
            <person name="Schubert V."/>
            <person name="Puchta H."/>
            <person name="Schubert I."/>
        </authorList>
    </citation>
    <scope>FUNCTION</scope>
    <scope>TISSUE SPECIFICITY</scope>
    <scope>DISRUPTION PHENOTYPE</scope>
</reference>
<gene>
    <name type="primary">SMC5</name>
    <name type="synonym">EMB2782</name>
    <name type="ordered locus">At5g15920</name>
    <name type="ORF">F1N13.60</name>
</gene>
<name>SMC5_ARATH</name>
<comment type="function">
    <text evidence="3">Core component of the SMC5-SMC6 complex that promotes sister chromatid alignment after DNA damage and facilitates double-stranded DNA breaks (DSBs) repair via homologous recombination between sister chromatids.</text>
</comment>
<comment type="subunit">
    <text evidence="1">Forms a heterodimer with SMC6A or SMC6B. The SMC5-SMC6 complex is composed of the SMC5 and SMC6 heterodimer attached via their hinge domain and from the non-SMC subunit NSE4A or NSE4B (By similarity).</text>
</comment>
<comment type="subcellular location">
    <subcellularLocation>
        <location evidence="1">Nucleus</location>
    </subcellularLocation>
    <subcellularLocation>
        <location evidence="1">Chromosome</location>
    </subcellularLocation>
    <text evidence="1">Associates with chromatin.</text>
</comment>
<comment type="tissue specificity">
    <text evidence="3">Expressed in seedlings, rosette leaves and floral buds.</text>
</comment>
<comment type="domain">
    <text evidence="1">The flexible hinge domain, which separates the large intramolecular coiled coil regions, allows the heterotypic interaction with the corresponding domain of SMC6, forming a V-shaped heterodimer.</text>
</comment>
<comment type="disruption phenotype">
    <text evidence="3">Lethal when homozygous.</text>
</comment>
<comment type="similarity">
    <text evidence="4">Belongs to the SMC family. SMC5 subfamily.</text>
</comment>
<sequence length="1053" mass="121441">MSERRAKRPKISRGEDDFLPGNIIEIELHNFMTFNHLVCKPGSRLNLVIGPNGSGKSSLVCAIALCLGGEPQLLGRATSVGAYVKRGEDSGYVKISLRGNTREENLTIFRKIDTRNKSEWMFNGSTVSKKDIVEIIQKFNIQVNNLTQFLPQDRVCEFAKLTPVQLLEETEKAVGDPQLPVHHRALVEKSRDLKQLERAVAKNGETLNQLKALVDEQEKDVERVRQRELFLTKVDSMKKKLPWLKYDMKKAEYMDAKKRMKEAEKKLDEAAKNLNSMKEPIEKQKKEKAETDSKCKKVKNLMDANGRNRCHLLEKEDEADARVVATYKELEELKKQEEHRQERILKATEDLVAAERELQNLPVYERPVAKLEELSSQVTELHHSINGKKNQKEDNEKLLSQKRYTLRQCVDKLKDMENANNKLLKALANSGADRIFDAYQWVQQNRHEFKREVYGPVLVEVNVPNRENACFLEGHVSFYIWKSFITQDPEDRDLLVKNLKRFDVPVLNYVGNSGNQKAPFHISDQMRSLGIHARLDQIFDAPDAVKEVLNSQFGLEDSYIGSKITDQRAEEVYKLGIKDFWTPDNHYRWSSSRYGGHSSASVDSVYQSRLLLCGVDVGELEKLRSRKEELEDSILFMEETHKSLQTEQRRLEEEAAKLHKEREEIVNVSYLEKKKRRELESRYQQRKTKLESLEQEEDMDASVAKLIDQASRANADRYTYAINLKKLLVEAVAHKWSYAEKHMASIELERKIRESEINIKQYEKTAQQLSLAVEYCKKEVEGKQQRLATAKRDAESVATITPELKKEFMEMPTTVEELEAAIQDNLSQANSILFINENILQEYEHRQSQIYTISTKLETDKRDLSICMKEIDSLKEKWLPTLRQLVGQINETFSHNFQEMAVAGEVSLDERDTDFDQYGIHIKVKFRESGQLQVLSSHHQSGGERSVSTILYLVSLQDLTNCPFRVVDEINQGMDPINERKMFQQLVRAASQPNTPQCFLLTPKLLPELEYSEACSILNIMNGPYIAEPSKVWSLGDSWGSLNRRRTEASQCS</sequence>